<proteinExistence type="evidence at transcript level"/>
<organism>
    <name type="scientific">Populus kitakamiensis</name>
    <name type="common">Aspen</name>
    <name type="synonym">Populus sieboldii x Populus grandidentata</name>
    <dbReference type="NCBI Taxonomy" id="34292"/>
    <lineage>
        <taxon>Eukaryota</taxon>
        <taxon>Viridiplantae</taxon>
        <taxon>Streptophyta</taxon>
        <taxon>Embryophyta</taxon>
        <taxon>Tracheophyta</taxon>
        <taxon>Spermatophyta</taxon>
        <taxon>Magnoliopsida</taxon>
        <taxon>eudicotyledons</taxon>
        <taxon>Gunneridae</taxon>
        <taxon>Pentapetalae</taxon>
        <taxon>rosids</taxon>
        <taxon>fabids</taxon>
        <taxon>Malpighiales</taxon>
        <taxon>Salicaceae</taxon>
        <taxon>Saliceae</taxon>
        <taxon>Populus</taxon>
    </lineage>
</organism>
<reference key="1">
    <citation type="submission" date="1997-01" db="EMBL/GenBank/DDBJ databases">
        <authorList>
            <person name="Kawai S."/>
            <person name="Maruyama M."/>
        </authorList>
    </citation>
    <scope>NUCLEOTIDE SEQUENCE [MRNA]</scope>
    <source>
        <strain>cv. Y-63</strain>
    </source>
</reference>
<keyword id="KW-0438">Lignin biosynthesis</keyword>
<keyword id="KW-0479">Metal-binding</keyword>
<keyword id="KW-0489">Methyltransferase</keyword>
<keyword id="KW-0949">S-adenosyl-L-methionine</keyword>
<keyword id="KW-0808">Transferase</keyword>
<feature type="chain" id="PRO_0000165691" description="Caffeoyl-CoA O-methyltransferase">
    <location>
        <begin position="1"/>
        <end position="235"/>
    </location>
</feature>
<feature type="binding site" evidence="1">
    <location>
        <position position="8"/>
    </location>
    <ligand>
        <name>substrate</name>
    </ligand>
</feature>
<feature type="binding site" evidence="2">
    <location>
        <position position="52"/>
    </location>
    <ligand>
        <name>S-adenosyl-L-methionine</name>
        <dbReference type="ChEBI" id="CHEBI:59789"/>
    </ligand>
</feature>
<feature type="binding site" evidence="2">
    <location>
        <position position="74"/>
    </location>
    <ligand>
        <name>S-adenosyl-L-methionine</name>
        <dbReference type="ChEBI" id="CHEBI:59789"/>
    </ligand>
</feature>
<feature type="binding site" evidence="2">
    <location>
        <begin position="76"/>
        <end position="77"/>
    </location>
    <ligand>
        <name>S-adenosyl-L-methionine</name>
        <dbReference type="ChEBI" id="CHEBI:59789"/>
    </ligand>
</feature>
<feature type="binding site" evidence="2">
    <location>
        <position position="82"/>
    </location>
    <ligand>
        <name>S-adenosyl-L-methionine</name>
        <dbReference type="ChEBI" id="CHEBI:59789"/>
    </ligand>
</feature>
<feature type="binding site" evidence="2">
    <location>
        <position position="100"/>
    </location>
    <ligand>
        <name>S-adenosyl-L-methionine</name>
        <dbReference type="ChEBI" id="CHEBI:59789"/>
    </ligand>
</feature>
<feature type="binding site" evidence="2">
    <location>
        <position position="129"/>
    </location>
    <ligand>
        <name>S-adenosyl-L-methionine</name>
        <dbReference type="ChEBI" id="CHEBI:59789"/>
    </ligand>
</feature>
<feature type="binding site" evidence="2">
    <location>
        <position position="151"/>
    </location>
    <ligand>
        <name>a divalent metal cation</name>
        <dbReference type="ChEBI" id="CHEBI:60240"/>
    </ligand>
</feature>
<feature type="binding site" evidence="1">
    <location>
        <position position="151"/>
    </location>
    <ligand>
        <name>substrate</name>
    </ligand>
</feature>
<feature type="binding site" evidence="2">
    <location>
        <position position="153"/>
    </location>
    <ligand>
        <name>S-adenosyl-L-methionine</name>
        <dbReference type="ChEBI" id="CHEBI:59789"/>
    </ligand>
</feature>
<feature type="binding site" evidence="2">
    <location>
        <position position="177"/>
    </location>
    <ligand>
        <name>a divalent metal cation</name>
        <dbReference type="ChEBI" id="CHEBI:60240"/>
    </ligand>
</feature>
<feature type="binding site" evidence="2">
    <location>
        <position position="178"/>
    </location>
    <ligand>
        <name>a divalent metal cation</name>
        <dbReference type="ChEBI" id="CHEBI:60240"/>
    </ligand>
</feature>
<dbReference type="EC" id="2.1.1.104"/>
<dbReference type="EMBL" id="AB000408">
    <property type="protein sequence ID" value="BAA19102.1"/>
    <property type="molecule type" value="mRNA"/>
</dbReference>
<dbReference type="SMR" id="P93711"/>
<dbReference type="UniPathway" id="UPA00711"/>
<dbReference type="GO" id="GO:0042409">
    <property type="term" value="F:caffeoyl-CoA O-methyltransferase activity"/>
    <property type="evidence" value="ECO:0007669"/>
    <property type="project" value="UniProtKB-EC"/>
</dbReference>
<dbReference type="GO" id="GO:0046872">
    <property type="term" value="F:metal ion binding"/>
    <property type="evidence" value="ECO:0007669"/>
    <property type="project" value="UniProtKB-KW"/>
</dbReference>
<dbReference type="GO" id="GO:0009809">
    <property type="term" value="P:lignin biosynthetic process"/>
    <property type="evidence" value="ECO:0007669"/>
    <property type="project" value="UniProtKB-KW"/>
</dbReference>
<dbReference type="GO" id="GO:0032259">
    <property type="term" value="P:methylation"/>
    <property type="evidence" value="ECO:0007669"/>
    <property type="project" value="UniProtKB-KW"/>
</dbReference>
<dbReference type="CDD" id="cd02440">
    <property type="entry name" value="AdoMet_MTases"/>
    <property type="match status" value="1"/>
</dbReference>
<dbReference type="Gene3D" id="3.40.50.150">
    <property type="entry name" value="Vaccinia Virus protein VP39"/>
    <property type="match status" value="1"/>
</dbReference>
<dbReference type="InterPro" id="IPR050362">
    <property type="entry name" value="Cation-dep_OMT"/>
</dbReference>
<dbReference type="InterPro" id="IPR029063">
    <property type="entry name" value="SAM-dependent_MTases_sf"/>
</dbReference>
<dbReference type="InterPro" id="IPR002935">
    <property type="entry name" value="SAM_O-MeTrfase"/>
</dbReference>
<dbReference type="PANTHER" id="PTHR10509">
    <property type="entry name" value="O-METHYLTRANSFERASE-RELATED"/>
    <property type="match status" value="1"/>
</dbReference>
<dbReference type="PANTHER" id="PTHR10509:SF34">
    <property type="entry name" value="TAPETUM-SPECIFIC METHYLTRANSFERASE 1"/>
    <property type="match status" value="1"/>
</dbReference>
<dbReference type="Pfam" id="PF01596">
    <property type="entry name" value="Methyltransf_3"/>
    <property type="match status" value="1"/>
</dbReference>
<dbReference type="SUPFAM" id="SSF53335">
    <property type="entry name" value="S-adenosyl-L-methionine-dependent methyltransferases"/>
    <property type="match status" value="1"/>
</dbReference>
<dbReference type="PROSITE" id="PS51682">
    <property type="entry name" value="SAM_OMT_I"/>
    <property type="match status" value="1"/>
</dbReference>
<protein>
    <recommendedName>
        <fullName>Caffeoyl-CoA O-methyltransferase</fullName>
        <ecNumber>2.1.1.104</ecNumber>
    </recommendedName>
    <alternativeName>
        <fullName>Trans-caffeoyl-CoA 3-O-methyltransferase</fullName>
        <shortName>CCoAMT</shortName>
        <shortName>CCoAOMT</shortName>
    </alternativeName>
</protein>
<comment type="function">
    <text>Methylates caffeoyl-CoA to feruloyl-CoA and 5-hydroxyferuloyl-CoA to sinapoyl-CoA. Plays a role in the synthesis of feruloylated polysaccharides. Involved in the reinforcement of the plant cell wall. Also involved in the responding to wounding or pathogen challenge by the increased formation of cell wall-bound ferulic acid polymers.</text>
</comment>
<comment type="catalytic activity">
    <reaction>
        <text>(E)-caffeoyl-CoA + S-adenosyl-L-methionine = (E)-feruloyl-CoA + S-adenosyl-L-homocysteine + H(+)</text>
        <dbReference type="Rhea" id="RHEA:16925"/>
        <dbReference type="ChEBI" id="CHEBI:15378"/>
        <dbReference type="ChEBI" id="CHEBI:57856"/>
        <dbReference type="ChEBI" id="CHEBI:59789"/>
        <dbReference type="ChEBI" id="CHEBI:87136"/>
        <dbReference type="ChEBI" id="CHEBI:87305"/>
        <dbReference type="EC" id="2.1.1.104"/>
    </reaction>
</comment>
<comment type="cofactor">
    <cofactor evidence="1">
        <name>a divalent metal cation</name>
        <dbReference type="ChEBI" id="CHEBI:60240"/>
    </cofactor>
    <text evidence="1">Binds 1 divalent metal cation per subunit.</text>
</comment>
<comment type="pathway">
    <text>Aromatic compound metabolism; phenylpropanoid biosynthesis.</text>
</comment>
<comment type="similarity">
    <text evidence="2">Belongs to the class I-like SAM-binding methyltransferase superfamily. Cation-dependent O-methyltransferase family. CCoAMT subfamily.</text>
</comment>
<name>CAMT_POPKI</name>
<sequence length="235" mass="26319">MAFVLPAKGILQSEALKQYIYETSAYPGEHEQLKELREATTKKYGSLSGMSVPVDEGRFLSMLLKLMNAKRTLEVGVFTGYSLLSTALALPEDGQVTAIDKDRGAYEIGLPFIQKAGVEDKINFIQSEAPPILNEMLCNDKQPEFDFAFVDADKSSYKHYHEQLLKLVKIGGIIAYDNTLWYGLVAKEVDDEVPEPLRMVRTVIMEFNKLLSSDLRVEISQISIGDGVTLCRRLC</sequence>
<evidence type="ECO:0000250" key="1">
    <source>
        <dbReference type="UniProtKB" id="Q40313"/>
    </source>
</evidence>
<evidence type="ECO:0000255" key="2">
    <source>
        <dbReference type="PROSITE-ProRule" id="PRU01019"/>
    </source>
</evidence>
<accession>P93711</accession>